<dbReference type="EMBL" id="CP000084">
    <property type="protein sequence ID" value="AAZ21912.1"/>
    <property type="molecule type" value="Genomic_DNA"/>
</dbReference>
<dbReference type="RefSeq" id="WP_006996819.1">
    <property type="nucleotide sequence ID" value="NC_007205.1"/>
</dbReference>
<dbReference type="SMR" id="Q4FLM6"/>
<dbReference type="STRING" id="335992.SAR11_1109"/>
<dbReference type="GeneID" id="66295598"/>
<dbReference type="KEGG" id="pub:SAR11_1109"/>
<dbReference type="HOGENOM" id="CLU_158491_1_0_5"/>
<dbReference type="OrthoDB" id="9815192at2"/>
<dbReference type="Proteomes" id="UP000002528">
    <property type="component" value="Chromosome"/>
</dbReference>
<dbReference type="GO" id="GO:1990904">
    <property type="term" value="C:ribonucleoprotein complex"/>
    <property type="evidence" value="ECO:0007669"/>
    <property type="project" value="UniProtKB-KW"/>
</dbReference>
<dbReference type="GO" id="GO:0005840">
    <property type="term" value="C:ribosome"/>
    <property type="evidence" value="ECO:0007669"/>
    <property type="project" value="UniProtKB-KW"/>
</dbReference>
<dbReference type="GO" id="GO:0003735">
    <property type="term" value="F:structural constituent of ribosome"/>
    <property type="evidence" value="ECO:0007669"/>
    <property type="project" value="InterPro"/>
</dbReference>
<dbReference type="GO" id="GO:0006412">
    <property type="term" value="P:translation"/>
    <property type="evidence" value="ECO:0007669"/>
    <property type="project" value="UniProtKB-UniRule"/>
</dbReference>
<dbReference type="CDD" id="cd00427">
    <property type="entry name" value="Ribosomal_L29_HIP"/>
    <property type="match status" value="1"/>
</dbReference>
<dbReference type="Gene3D" id="1.10.287.310">
    <property type="match status" value="1"/>
</dbReference>
<dbReference type="HAMAP" id="MF_00374">
    <property type="entry name" value="Ribosomal_uL29"/>
    <property type="match status" value="1"/>
</dbReference>
<dbReference type="InterPro" id="IPR001854">
    <property type="entry name" value="Ribosomal_uL29"/>
</dbReference>
<dbReference type="InterPro" id="IPR036049">
    <property type="entry name" value="Ribosomal_uL29_sf"/>
</dbReference>
<dbReference type="NCBIfam" id="TIGR00012">
    <property type="entry name" value="L29"/>
    <property type="match status" value="1"/>
</dbReference>
<dbReference type="Pfam" id="PF00831">
    <property type="entry name" value="Ribosomal_L29"/>
    <property type="match status" value="1"/>
</dbReference>
<dbReference type="SUPFAM" id="SSF46561">
    <property type="entry name" value="Ribosomal protein L29 (L29p)"/>
    <property type="match status" value="1"/>
</dbReference>
<protein>
    <recommendedName>
        <fullName evidence="1">Large ribosomal subunit protein uL29</fullName>
    </recommendedName>
    <alternativeName>
        <fullName evidence="2">50S ribosomal protein L29</fullName>
    </alternativeName>
</protein>
<comment type="similarity">
    <text evidence="1">Belongs to the universal ribosomal protein uL29 family.</text>
</comment>
<gene>
    <name evidence="1" type="primary">rpmC</name>
    <name type="ordered locus">SAR11_1109</name>
</gene>
<keyword id="KW-1185">Reference proteome</keyword>
<keyword id="KW-0687">Ribonucleoprotein</keyword>
<keyword id="KW-0689">Ribosomal protein</keyword>
<organism>
    <name type="scientific">Pelagibacter ubique (strain HTCC1062)</name>
    <dbReference type="NCBI Taxonomy" id="335992"/>
    <lineage>
        <taxon>Bacteria</taxon>
        <taxon>Pseudomonadati</taxon>
        <taxon>Pseudomonadota</taxon>
        <taxon>Alphaproteobacteria</taxon>
        <taxon>Candidatus Pelagibacterales</taxon>
        <taxon>Candidatus Pelagibacteraceae</taxon>
        <taxon>Candidatus Pelagibacter</taxon>
    </lineage>
</organism>
<proteinExistence type="inferred from homology"/>
<evidence type="ECO:0000255" key="1">
    <source>
        <dbReference type="HAMAP-Rule" id="MF_00374"/>
    </source>
</evidence>
<evidence type="ECO:0000305" key="2"/>
<reference key="1">
    <citation type="journal article" date="2005" name="Science">
        <title>Genome streamlining in a cosmopolitan oceanic bacterium.</title>
        <authorList>
            <person name="Giovannoni S.J."/>
            <person name="Tripp H.J."/>
            <person name="Givan S."/>
            <person name="Podar M."/>
            <person name="Vergin K.L."/>
            <person name="Baptista D."/>
            <person name="Bibbs L."/>
            <person name="Eads J."/>
            <person name="Richardson T.H."/>
            <person name="Noordewier M."/>
            <person name="Rappe M.S."/>
            <person name="Short J.M."/>
            <person name="Carrington J.C."/>
            <person name="Mathur E.J."/>
        </authorList>
    </citation>
    <scope>NUCLEOTIDE SEQUENCE [LARGE SCALE GENOMIC DNA]</scope>
    <source>
        <strain>HTCC1062</strain>
    </source>
</reference>
<sequence>MKKQEIKKLSKDEVIKNIDKLKKDLFNFRFQKINSQVTDPSKIGQTKKTIARLKTTLKGKLNA</sequence>
<name>RL29_PELUB</name>
<accession>Q4FLM6</accession>
<feature type="chain" id="PRO_1000007548" description="Large ribosomal subunit protein uL29">
    <location>
        <begin position="1"/>
        <end position="63"/>
    </location>
</feature>